<name>IFNA2_HUMAN</name>
<keyword id="KW-0002">3D-structure</keyword>
<keyword id="KW-0051">Antiviral defense</keyword>
<keyword id="KW-0202">Cytokine</keyword>
<keyword id="KW-0903">Direct protein sequencing</keyword>
<keyword id="KW-1015">Disulfide bond</keyword>
<keyword id="KW-0325">Glycoprotein</keyword>
<keyword id="KW-0582">Pharmaceutical</keyword>
<keyword id="KW-1267">Proteomics identification</keyword>
<keyword id="KW-1185">Reference proteome</keyword>
<keyword id="KW-0964">Secreted</keyword>
<keyword id="KW-0732">Signal</keyword>
<organism>
    <name type="scientific">Homo sapiens</name>
    <name type="common">Human</name>
    <dbReference type="NCBI Taxonomy" id="9606"/>
    <lineage>
        <taxon>Eukaryota</taxon>
        <taxon>Metazoa</taxon>
        <taxon>Chordata</taxon>
        <taxon>Craniata</taxon>
        <taxon>Vertebrata</taxon>
        <taxon>Euteleostomi</taxon>
        <taxon>Mammalia</taxon>
        <taxon>Eutheria</taxon>
        <taxon>Euarchontoglires</taxon>
        <taxon>Primates</taxon>
        <taxon>Haplorrhini</taxon>
        <taxon>Catarrhini</taxon>
        <taxon>Hominidae</taxon>
        <taxon>Homo</taxon>
    </lineage>
</organism>
<sequence length="188" mass="21578">MALTFALLVALLVLSCKSSCSVGCDLPQTHSLGSRRTLMLLAQMRRISLFSCLKDRHDFGFPQEEFGNQFQKAETIPVLHEMIQQIFNLFSTKDSSAAWDETLLDKFYTELYQQLNDLEACVIQGVGVTETPLMKEDSILAVRKYFQRITLYLKEKKYSPCAWEVVRAEIMRSFSLSTNLQESLRSKE</sequence>
<comment type="function">
    <text evidence="7">Produced by macrophages, IFN-alpha have antiviral activities.</text>
</comment>
<comment type="subunit">
    <text evidence="2 4">Interacts with IFNAR2.</text>
</comment>
<comment type="interaction">
    <interactant intactId="EBI-4394394">
        <id>P01563</id>
    </interactant>
    <interactant intactId="EBI-958408">
        <id>P48551</id>
        <label>IFNAR2</label>
    </interactant>
    <organismsDiffer>false</organismsDiffer>
    <experiments>2</experiments>
</comment>
<comment type="interaction">
    <interactant intactId="EBI-4394394">
        <id>P01563</id>
    </interactant>
    <interactant intactId="EBI-6268651">
        <id>Q9NPL8</id>
        <label>TIMMDC1</label>
    </interactant>
    <organismsDiffer>false</organismsDiffer>
    <experiments>3</experiments>
</comment>
<comment type="subcellular location">
    <subcellularLocation>
        <location evidence="7">Secreted</location>
    </subcellularLocation>
</comment>
<comment type="polymorphism">
    <text evidence="10">Three alleles exist; alpha-2A, alpha-2B (shown here) and alpha-2C (PubMed:7627809). Allele alpha-2B is the predominant allele while allele alpha-2A is less predominant and alpha-2C only a minor allelic variant.</text>
</comment>
<comment type="pharmaceutical">
    <text>Available under the names Roferon-A (Roche) or Intron-A (Schering-Plough). Used as an anticancer drug for its antiproliferative activity.</text>
</comment>
<comment type="similarity">
    <text evidence="13">Belongs to the alpha/beta interferon family.</text>
</comment>
<protein>
    <recommendedName>
        <fullName>Interferon alpha-2</fullName>
        <shortName>IFN-alpha-2</shortName>
    </recommendedName>
    <alternativeName>
        <fullName>Interferon alpha-A</fullName>
        <shortName evidence="12">LeIF A</shortName>
    </alternativeName>
</protein>
<gene>
    <name type="primary">IFNA2</name>
    <name type="synonym">IFNA2A</name>
    <name type="synonym">IFNA2B</name>
    <name type="synonym">IFNA2C</name>
</gene>
<accession>P01563</accession>
<accession>H2DF54</accession>
<accession>H2DF55</accession>
<accession>P01564</accession>
<accession>Q14606</accession>
<accession>Q6DJX8</accession>
<accession>Q96KI6</accession>
<dbReference type="EMBL" id="J00207">
    <property type="protein sequence ID" value="AAB59402.1"/>
    <property type="molecule type" value="Genomic_DNA"/>
</dbReference>
<dbReference type="EMBL" id="V00544">
    <property type="protein sequence ID" value="CAA23805.1"/>
    <property type="molecule type" value="mRNA"/>
</dbReference>
<dbReference type="EMBL" id="V00548">
    <property type="protein sequence ID" value="CAA23809.1"/>
    <property type="molecule type" value="mRNA"/>
</dbReference>
<dbReference type="EMBL" id="V00549">
    <property type="protein sequence ID" value="CAA23810.1"/>
    <property type="molecule type" value="mRNA"/>
</dbReference>
<dbReference type="EMBL" id="Y11834">
    <property type="protein sequence ID" value="CAA72532.1"/>
    <property type="molecule type" value="Genomic_DNA"/>
</dbReference>
<dbReference type="EMBL" id="JN591568">
    <property type="protein sequence ID" value="AEX60802.1"/>
    <property type="molecule type" value="mRNA"/>
</dbReference>
<dbReference type="EMBL" id="JN591569">
    <property type="protein sequence ID" value="AEX60803.1"/>
    <property type="molecule type" value="mRNA"/>
</dbReference>
<dbReference type="EMBL" id="JN591570">
    <property type="protein sequence ID" value="AEX60804.1"/>
    <property type="molecule type" value="mRNA"/>
</dbReference>
<dbReference type="EMBL" id="JN848522">
    <property type="protein sequence ID" value="AET86951.1"/>
    <property type="molecule type" value="mRNA"/>
</dbReference>
<dbReference type="EMBL" id="CR541921">
    <property type="protein sequence ID" value="CAG46719.1"/>
    <property type="molecule type" value="mRNA"/>
</dbReference>
<dbReference type="EMBL" id="AL353732">
    <property type="status" value="NOT_ANNOTATED_CDS"/>
    <property type="molecule type" value="Genomic_DNA"/>
</dbReference>
<dbReference type="EMBL" id="CH471071">
    <property type="protein sequence ID" value="EAW58611.1"/>
    <property type="molecule type" value="Genomic_DNA"/>
</dbReference>
<dbReference type="EMBL" id="BC074936">
    <property type="protein sequence ID" value="AAH74936.1"/>
    <property type="molecule type" value="mRNA"/>
</dbReference>
<dbReference type="EMBL" id="BC074937">
    <property type="protein sequence ID" value="AAH74937.1"/>
    <property type="molecule type" value="mRNA"/>
</dbReference>
<dbReference type="EMBL" id="BC104163">
    <property type="protein sequence ID" value="AAI04164.1"/>
    <property type="molecule type" value="mRNA"/>
</dbReference>
<dbReference type="EMBL" id="BC104164">
    <property type="protein sequence ID" value="AAI04165.1"/>
    <property type="molecule type" value="mRNA"/>
</dbReference>
<dbReference type="EMBL" id="M54886">
    <property type="protein sequence ID" value="AAA59181.1"/>
    <property type="molecule type" value="mRNA"/>
</dbReference>
<dbReference type="EMBL" id="M29883">
    <property type="protein sequence ID" value="AAA52715.1"/>
    <property type="molecule type" value="Genomic_DNA"/>
</dbReference>
<dbReference type="CCDS" id="CCDS6506.1"/>
<dbReference type="PIR" id="A93234">
    <property type="entry name" value="IVHUA2"/>
</dbReference>
<dbReference type="PIR" id="I78570">
    <property type="entry name" value="I78570"/>
</dbReference>
<dbReference type="RefSeq" id="NP_000596.2">
    <property type="nucleotide sequence ID" value="NM_000605.3"/>
</dbReference>
<dbReference type="PDB" id="1ITF">
    <property type="method" value="NMR"/>
    <property type="chains" value="A=24-188"/>
</dbReference>
<dbReference type="PDB" id="1RH2">
    <property type="method" value="X-ray"/>
    <property type="resolution" value="2.90 A"/>
    <property type="chains" value="A/B/C/D/E/F=24-188"/>
</dbReference>
<dbReference type="PDB" id="2HYM">
    <property type="method" value="NMR"/>
    <property type="chains" value="B=24-188"/>
</dbReference>
<dbReference type="PDB" id="2KZ1">
    <property type="method" value="NMR"/>
    <property type="chains" value="A=24-188"/>
</dbReference>
<dbReference type="PDB" id="2LAG">
    <property type="method" value="NMR"/>
    <property type="chains" value="A=24-188"/>
</dbReference>
<dbReference type="PDB" id="2LMS">
    <property type="method" value="NMR"/>
    <property type="chains" value="A=24-188"/>
</dbReference>
<dbReference type="PDB" id="3S9D">
    <property type="method" value="X-ray"/>
    <property type="resolution" value="2.00 A"/>
    <property type="chains" value="A/C=24-188"/>
</dbReference>
<dbReference type="PDB" id="3SE3">
    <property type="method" value="X-ray"/>
    <property type="resolution" value="4.00 A"/>
    <property type="chains" value="B=24-188"/>
</dbReference>
<dbReference type="PDB" id="4YPG">
    <property type="method" value="X-ray"/>
    <property type="resolution" value="3.00 A"/>
    <property type="chains" value="C/D=24-182"/>
</dbReference>
<dbReference type="PDB" id="4Z5R">
    <property type="method" value="X-ray"/>
    <property type="resolution" value="3.00 A"/>
    <property type="chains" value="D/E/F/G/H/I/N/X=24-188"/>
</dbReference>
<dbReference type="PDBsum" id="1ITF"/>
<dbReference type="PDBsum" id="1RH2"/>
<dbReference type="PDBsum" id="2HYM"/>
<dbReference type="PDBsum" id="2KZ1"/>
<dbReference type="PDBsum" id="2LAG"/>
<dbReference type="PDBsum" id="2LMS"/>
<dbReference type="PDBsum" id="3S9D"/>
<dbReference type="PDBsum" id="3SE3"/>
<dbReference type="PDBsum" id="4YPG"/>
<dbReference type="PDBsum" id="4Z5R"/>
<dbReference type="BMRB" id="P01563"/>
<dbReference type="SMR" id="P01563"/>
<dbReference type="BioGRID" id="109663">
    <property type="interactions" value="11"/>
</dbReference>
<dbReference type="ComplexPortal" id="CPX-5995">
    <property type="entry name" value="Interferon alpha receptor-ligand complex, IFNA2 variant"/>
</dbReference>
<dbReference type="CORUM" id="P01563"/>
<dbReference type="DIP" id="DIP-481N"/>
<dbReference type="FunCoup" id="P01563">
    <property type="interactions" value="948"/>
</dbReference>
<dbReference type="IntAct" id="P01563">
    <property type="interactions" value="12"/>
</dbReference>
<dbReference type="STRING" id="9606.ENSP00000369554"/>
<dbReference type="ChEMBL" id="CHEMBL3856161"/>
<dbReference type="DrugBank" id="DB00105">
    <property type="generic name" value="Interferon alfa-2b"/>
</dbReference>
<dbReference type="DrugBank" id="DB12773">
    <property type="generic name" value="Sifalimumab"/>
</dbReference>
<dbReference type="Allergome" id="9876">
    <property type="allergen name" value="Hom s IFN alpha"/>
</dbReference>
<dbReference type="GlyConnect" id="289">
    <property type="glycosylation" value="7 O-Linked glycans (1 site)"/>
</dbReference>
<dbReference type="GlyCosmos" id="P01563">
    <property type="glycosylation" value="1 site, 11 glycans"/>
</dbReference>
<dbReference type="GlyGen" id="P01563">
    <property type="glycosylation" value="1 site, 11 O-linked glycans (1 site)"/>
</dbReference>
<dbReference type="iPTMnet" id="P01563"/>
<dbReference type="PhosphoSitePlus" id="P01563"/>
<dbReference type="BioMuta" id="IFNA2"/>
<dbReference type="DMDM" id="124449"/>
<dbReference type="MassIVE" id="P01563"/>
<dbReference type="PaxDb" id="9606-ENSP00000369554"/>
<dbReference type="PeptideAtlas" id="P01563"/>
<dbReference type="ProteomicsDB" id="51381"/>
<dbReference type="ABCD" id="P01563">
    <property type="antibodies" value="3 sequenced antibodies"/>
</dbReference>
<dbReference type="Antibodypedia" id="10443">
    <property type="antibodies" value="1191 antibodies from 37 providers"/>
</dbReference>
<dbReference type="DNASU" id="3440"/>
<dbReference type="Ensembl" id="ENST00000380206.4">
    <property type="protein sequence ID" value="ENSP00000369554.2"/>
    <property type="gene ID" value="ENSG00000188379.7"/>
</dbReference>
<dbReference type="GeneID" id="3440"/>
<dbReference type="KEGG" id="hsa:3440"/>
<dbReference type="MANE-Select" id="ENST00000380206.4">
    <property type="protein sequence ID" value="ENSP00000369554.2"/>
    <property type="RefSeq nucleotide sequence ID" value="NM_000605.4"/>
    <property type="RefSeq protein sequence ID" value="NP_000596.2"/>
</dbReference>
<dbReference type="UCSC" id="uc003zpb.4">
    <property type="organism name" value="human"/>
</dbReference>
<dbReference type="AGR" id="HGNC:5423"/>
<dbReference type="CTD" id="3440"/>
<dbReference type="DisGeNET" id="3440"/>
<dbReference type="GeneCards" id="IFNA2"/>
<dbReference type="HGNC" id="HGNC:5423">
    <property type="gene designation" value="IFNA2"/>
</dbReference>
<dbReference type="HPA" id="ENSG00000188379">
    <property type="expression patterns" value="Not detected"/>
</dbReference>
<dbReference type="MIM" id="147562">
    <property type="type" value="gene"/>
</dbReference>
<dbReference type="neXtProt" id="NX_P01563"/>
<dbReference type="OpenTargets" id="ENSG00000188379"/>
<dbReference type="PharmGKB" id="PA29662"/>
<dbReference type="VEuPathDB" id="HostDB:ENSG00000188379"/>
<dbReference type="eggNOG" id="ENOG502SQAC">
    <property type="taxonomic scope" value="Eukaryota"/>
</dbReference>
<dbReference type="GeneTree" id="ENSGT01000000214430"/>
<dbReference type="HOGENOM" id="CLU_109427_0_0_1"/>
<dbReference type="InParanoid" id="P01563"/>
<dbReference type="OMA" id="TETPLMN"/>
<dbReference type="OrthoDB" id="9833506at2759"/>
<dbReference type="PAN-GO" id="P01563">
    <property type="GO annotations" value="12 GO annotations based on evolutionary models"/>
</dbReference>
<dbReference type="PhylomeDB" id="P01563"/>
<dbReference type="TreeFam" id="TF336177"/>
<dbReference type="PathwayCommons" id="P01563"/>
<dbReference type="Reactome" id="R-HSA-909733">
    <property type="pathway name" value="Interferon alpha/beta signaling"/>
</dbReference>
<dbReference type="Reactome" id="R-HSA-912694">
    <property type="pathway name" value="Regulation of IFNA/IFNB signaling"/>
</dbReference>
<dbReference type="Reactome" id="R-HSA-933541">
    <property type="pathway name" value="TRAF6 mediated IRF7 activation"/>
</dbReference>
<dbReference type="Reactome" id="R-HSA-9705671">
    <property type="pathway name" value="SARS-CoV-2 activates/modulates innate and adaptive immune responses"/>
</dbReference>
<dbReference type="Reactome" id="R-HSA-983231">
    <property type="pathway name" value="Factors involved in megakaryocyte development and platelet production"/>
</dbReference>
<dbReference type="Reactome" id="R-HSA-9833109">
    <property type="pathway name" value="Evasion by RSV of host interferon responses"/>
</dbReference>
<dbReference type="SignaLink" id="P01563"/>
<dbReference type="SIGNOR" id="P01563"/>
<dbReference type="BioGRID-ORCS" id="3440">
    <property type="hits" value="10 hits in 1107 CRISPR screens"/>
</dbReference>
<dbReference type="EvolutionaryTrace" id="P01563"/>
<dbReference type="GeneWiki" id="IFNA2"/>
<dbReference type="GenomeRNAi" id="3440"/>
<dbReference type="Pharos" id="P01563">
    <property type="development level" value="Tbio"/>
</dbReference>
<dbReference type="PRO" id="PR:P01563"/>
<dbReference type="Proteomes" id="UP000005640">
    <property type="component" value="Chromosome 9"/>
</dbReference>
<dbReference type="RNAct" id="P01563">
    <property type="molecule type" value="protein"/>
</dbReference>
<dbReference type="Bgee" id="ENSG00000188379">
    <property type="expression patterns" value="Expressed in male germ line stem cell (sensu Vertebrata) in testis and 30 other cell types or tissues"/>
</dbReference>
<dbReference type="GO" id="GO:0062023">
    <property type="term" value="C:collagen-containing extracellular matrix"/>
    <property type="evidence" value="ECO:0007005"/>
    <property type="project" value="BHF-UCL"/>
</dbReference>
<dbReference type="GO" id="GO:0005576">
    <property type="term" value="C:extracellular region"/>
    <property type="evidence" value="ECO:0000304"/>
    <property type="project" value="Reactome"/>
</dbReference>
<dbReference type="GO" id="GO:0005615">
    <property type="term" value="C:extracellular space"/>
    <property type="evidence" value="ECO:0000314"/>
    <property type="project" value="UniProt"/>
</dbReference>
<dbReference type="GO" id="GO:0005125">
    <property type="term" value="F:cytokine activity"/>
    <property type="evidence" value="ECO:0000314"/>
    <property type="project" value="UniProt"/>
</dbReference>
<dbReference type="GO" id="GO:0005132">
    <property type="term" value="F:type I interferon receptor binding"/>
    <property type="evidence" value="ECO:0000318"/>
    <property type="project" value="GO_Central"/>
</dbReference>
<dbReference type="GO" id="GO:0002250">
    <property type="term" value="P:adaptive immune response"/>
    <property type="evidence" value="ECO:0000318"/>
    <property type="project" value="GO_Central"/>
</dbReference>
<dbReference type="GO" id="GO:0006915">
    <property type="term" value="P:apoptotic process"/>
    <property type="evidence" value="ECO:0000304"/>
    <property type="project" value="ProtInc"/>
</dbReference>
<dbReference type="GO" id="GO:0002312">
    <property type="term" value="P:B cell activation involved in immune response"/>
    <property type="evidence" value="ECO:0000318"/>
    <property type="project" value="GO_Central"/>
</dbReference>
<dbReference type="GO" id="GO:0007166">
    <property type="term" value="P:cell surface receptor signaling pathway"/>
    <property type="evidence" value="ECO:0000304"/>
    <property type="project" value="ProtInc"/>
</dbReference>
<dbReference type="GO" id="GO:0097696">
    <property type="term" value="P:cell surface receptor signaling pathway via STAT"/>
    <property type="evidence" value="ECO:0000314"/>
    <property type="project" value="BHF-UCL"/>
</dbReference>
<dbReference type="GO" id="GO:0007267">
    <property type="term" value="P:cell-cell signaling"/>
    <property type="evidence" value="ECO:0000304"/>
    <property type="project" value="ProtInc"/>
</dbReference>
<dbReference type="GO" id="GO:0098586">
    <property type="term" value="P:cellular response to virus"/>
    <property type="evidence" value="ECO:0000303"/>
    <property type="project" value="ComplexPortal"/>
</dbReference>
<dbReference type="GO" id="GO:0051607">
    <property type="term" value="P:defense response to virus"/>
    <property type="evidence" value="ECO:0000314"/>
    <property type="project" value="BHF-UCL"/>
</dbReference>
<dbReference type="GO" id="GO:0046597">
    <property type="term" value="P:host-mediated suppression of symbiont invasion"/>
    <property type="evidence" value="ECO:0000314"/>
    <property type="project" value="BHF-UCL"/>
</dbReference>
<dbReference type="GO" id="GO:0006959">
    <property type="term" value="P:humoral immune response"/>
    <property type="evidence" value="ECO:0000318"/>
    <property type="project" value="GO_Central"/>
</dbReference>
<dbReference type="GO" id="GO:0006954">
    <property type="term" value="P:inflammatory response"/>
    <property type="evidence" value="ECO:0000304"/>
    <property type="project" value="ProtInc"/>
</dbReference>
<dbReference type="GO" id="GO:0002323">
    <property type="term" value="P:natural killer cell activation involved in immune response"/>
    <property type="evidence" value="ECO:0000318"/>
    <property type="project" value="GO_Central"/>
</dbReference>
<dbReference type="GO" id="GO:0045892">
    <property type="term" value="P:negative regulation of DNA-templated transcription"/>
    <property type="evidence" value="ECO:0000314"/>
    <property type="project" value="UniProtKB"/>
</dbReference>
<dbReference type="GO" id="GO:0010629">
    <property type="term" value="P:negative regulation of gene expression"/>
    <property type="evidence" value="ECO:0000314"/>
    <property type="project" value="UniProtKB"/>
</dbReference>
<dbReference type="GO" id="GO:0032696">
    <property type="term" value="P:negative regulation of interleukin-13 production"/>
    <property type="evidence" value="ECO:0000314"/>
    <property type="project" value="UniProtKB"/>
</dbReference>
<dbReference type="GO" id="GO:0032714">
    <property type="term" value="P:negative regulation of interleukin-5 production"/>
    <property type="evidence" value="ECO:0000314"/>
    <property type="project" value="UniProtKB"/>
</dbReference>
<dbReference type="GO" id="GO:0045581">
    <property type="term" value="P:negative regulation of T cell differentiation"/>
    <property type="evidence" value="ECO:0000314"/>
    <property type="project" value="UniProtKB"/>
</dbReference>
<dbReference type="GO" id="GO:2000552">
    <property type="term" value="P:negative regulation of T-helper 2 cell cytokine production"/>
    <property type="evidence" value="ECO:0000314"/>
    <property type="project" value="UniProtKB"/>
</dbReference>
<dbReference type="GO" id="GO:0043330">
    <property type="term" value="P:response to exogenous dsRNA"/>
    <property type="evidence" value="ECO:0000318"/>
    <property type="project" value="GO_Central"/>
</dbReference>
<dbReference type="GO" id="GO:0002286">
    <property type="term" value="P:T cell activation involved in immune response"/>
    <property type="evidence" value="ECO:0000318"/>
    <property type="project" value="GO_Central"/>
</dbReference>
<dbReference type="GO" id="GO:0060337">
    <property type="term" value="P:type I interferon-mediated signaling pathway"/>
    <property type="evidence" value="ECO:0000314"/>
    <property type="project" value="BHF-UCL"/>
</dbReference>
<dbReference type="CDD" id="cd00095">
    <property type="entry name" value="IFab"/>
    <property type="match status" value="1"/>
</dbReference>
<dbReference type="FunFam" id="1.20.1250.10:FF:000001">
    <property type="entry name" value="Interferon alpha"/>
    <property type="match status" value="1"/>
</dbReference>
<dbReference type="Gene3D" id="1.20.1250.10">
    <property type="match status" value="1"/>
</dbReference>
<dbReference type="InterPro" id="IPR009079">
    <property type="entry name" value="4_helix_cytokine-like_core"/>
</dbReference>
<dbReference type="InterPro" id="IPR000471">
    <property type="entry name" value="Interferon_alpha/beta/delta"/>
</dbReference>
<dbReference type="PANTHER" id="PTHR11691:SF70">
    <property type="entry name" value="INTERFERON ALPHA-2"/>
    <property type="match status" value="1"/>
</dbReference>
<dbReference type="PANTHER" id="PTHR11691">
    <property type="entry name" value="TYPE I INTERFERON"/>
    <property type="match status" value="1"/>
</dbReference>
<dbReference type="Pfam" id="PF00143">
    <property type="entry name" value="Interferon"/>
    <property type="match status" value="1"/>
</dbReference>
<dbReference type="PRINTS" id="PR00266">
    <property type="entry name" value="INTERFERONAB"/>
</dbReference>
<dbReference type="SMART" id="SM00076">
    <property type="entry name" value="IFabd"/>
    <property type="match status" value="1"/>
</dbReference>
<dbReference type="SUPFAM" id="SSF47266">
    <property type="entry name" value="4-helical cytokines"/>
    <property type="match status" value="1"/>
</dbReference>
<dbReference type="PROSITE" id="PS00252">
    <property type="entry name" value="INTERFERON_A_B_D"/>
    <property type="match status" value="1"/>
</dbReference>
<reference key="1">
    <citation type="journal article" date="1980" name="Nature">
        <title>Human leukocyte interferon produced by E. coli is biologically active.</title>
        <authorList>
            <person name="Goeddel D.V."/>
            <person name="Yelverton E."/>
            <person name="Ullrich A."/>
            <person name="Heyneker H.L."/>
            <person name="Miozzari G."/>
            <person name="Holmes W."/>
            <person name="Seeburg P.H."/>
            <person name="Dull T.J."/>
            <person name="May L."/>
            <person name="Stebbing N."/>
            <person name="Crea R."/>
            <person name="Maeda S."/>
            <person name="McCandliss R."/>
            <person name="Sloma A."/>
            <person name="Tabor J.M."/>
            <person name="Gross M."/>
            <person name="Familletti P.C."/>
            <person name="Pestka S."/>
        </authorList>
    </citation>
    <scope>NUCLEOTIDE SEQUENCE [GENOMIC DNA / MRNA] (ALLELES ALPHA-2A AND ALPHA-2B)</scope>
    <scope>SUBCELLULAR LOCATION</scope>
    <scope>FUNCTION</scope>
</reference>
<reference key="2">
    <citation type="journal article" date="1981" name="Nature">
        <title>The structure of eight distinct cloned human leukocyte interferon cDNAs.</title>
        <authorList>
            <person name="Goeddel D.V."/>
            <person name="Leung D.W."/>
            <person name="Dull T.J."/>
            <person name="Gross M."/>
            <person name="Lawn R.M."/>
            <person name="McCandliss R."/>
            <person name="Seeburg P.H."/>
            <person name="Ullrich A."/>
            <person name="Yelverton E."/>
            <person name="Gray P.W."/>
        </authorList>
    </citation>
    <scope>NUCLEOTIDE SEQUENCE [GENOMIC DNA / MRNA] (ALLELES ALPHA-2A AND ALPHA-2B)</scope>
</reference>
<reference key="3">
    <citation type="journal article" date="1981" name="Proc. Natl. Acad. Sci. U.S.A.">
        <title>DNA sequence of a major human leukocyte interferon gene.</title>
        <authorList>
            <person name="Lawn R.M."/>
            <person name="Gross M."/>
            <person name="Houck C.M."/>
            <person name="Franke A.E."/>
            <person name="Gray P.V."/>
            <person name="Goeddel D.V."/>
        </authorList>
    </citation>
    <scope>NUCLEOTIDE SEQUENCE [GENOMIC DNA / MRNA] (ALLELE ALPHA-2B)</scope>
</reference>
<reference key="4">
    <citation type="journal article" date="1985" name="Rev. Latinoam. Microbiol.">
        <title>Cloning of human leukocyte interferon cDNA and a strategy for its production in E. coli.</title>
        <authorList>
            <person name="Oliver G."/>
            <person name="Balbas P."/>
            <person name="Valle F."/>
            <person name="Soberon X."/>
            <person name="Bolivar F."/>
        </authorList>
    </citation>
    <scope>NUCLEOTIDE SEQUENCE [MRNA] (ALLELES ALPHA-2A AND ALPHA-2B)</scope>
    <source>
        <tissue>Bone marrow tumor</tissue>
    </source>
</reference>
<reference key="5">
    <citation type="journal article" date="1998" name="Cancer Gene Ther.">
        <title>A defective retroviral vector encoding human interferon alpha 2 can transduce human leukemic cell lines.</title>
        <authorList>
            <person name="Austruy E."/>
            <person name="Bagnis C."/>
            <person name="Carbuccia N."/>
            <person name="Maroc C."/>
            <person name="Birg F."/>
            <person name="Dubreuil P."/>
            <person name="Mannoni P."/>
            <person name="Chabannon C."/>
        </authorList>
    </citation>
    <scope>NUCLEOTIDE SEQUENCE [GENOMIC DNA] (ALLELE ALPHA-2B)</scope>
    <source>
        <tissue>Placenta</tissue>
    </source>
</reference>
<reference key="6">
    <citation type="journal article" date="2013" name="Springerplus">
        <title>Heterologous expression, immunochemical and computational analysis of recombinant human interferon alpha 2b.</title>
        <authorList>
            <person name="Gull I."/>
            <person name="Samra Z.Q."/>
            <person name="Aslam M.S."/>
            <person name="Athar M.A."/>
        </authorList>
    </citation>
    <scope>NUCLEOTIDE SEQUENCE [MRNA] (ALLELE ALPHA-2B)</scope>
</reference>
<reference key="7">
    <citation type="submission" date="2011-10" db="EMBL/GenBank/DDBJ databases">
        <authorList>
            <person name="Hanif K."/>
            <person name="Noor S."/>
            <person name="Naveed Y."/>
            <person name="Bashir B."/>
            <person name="Hussain T."/>
            <person name="Kanwal N."/>
        </authorList>
    </citation>
    <scope>NUCLEOTIDE SEQUENCE [MRNA] (ALLELE ALPHA-2B)</scope>
</reference>
<reference key="8">
    <citation type="submission" date="2004-06" db="EMBL/GenBank/DDBJ databases">
        <title>Cloning of human full open reading frames in Gateway(TM) system entry vector (pDONR201).</title>
        <authorList>
            <person name="Ebert L."/>
            <person name="Schick M."/>
            <person name="Neubert P."/>
            <person name="Schatten R."/>
            <person name="Henze S."/>
            <person name="Korn B."/>
        </authorList>
    </citation>
    <scope>NUCLEOTIDE SEQUENCE [LARGE SCALE MRNA] (ALLELE ALPHA-2B)</scope>
</reference>
<reference key="9">
    <citation type="journal article" date="2004" name="Nature">
        <title>DNA sequence and analysis of human chromosome 9.</title>
        <authorList>
            <person name="Humphray S.J."/>
            <person name="Oliver K."/>
            <person name="Hunt A.R."/>
            <person name="Plumb R.W."/>
            <person name="Loveland J.E."/>
            <person name="Howe K.L."/>
            <person name="Andrews T.D."/>
            <person name="Searle S."/>
            <person name="Hunt S.E."/>
            <person name="Scott C.E."/>
            <person name="Jones M.C."/>
            <person name="Ainscough R."/>
            <person name="Almeida J.P."/>
            <person name="Ambrose K.D."/>
            <person name="Ashwell R.I.S."/>
            <person name="Babbage A.K."/>
            <person name="Babbage S."/>
            <person name="Bagguley C.L."/>
            <person name="Bailey J."/>
            <person name="Banerjee R."/>
            <person name="Barker D.J."/>
            <person name="Barlow K.F."/>
            <person name="Bates K."/>
            <person name="Beasley H."/>
            <person name="Beasley O."/>
            <person name="Bird C.P."/>
            <person name="Bray-Allen S."/>
            <person name="Brown A.J."/>
            <person name="Brown J.Y."/>
            <person name="Burford D."/>
            <person name="Burrill W."/>
            <person name="Burton J."/>
            <person name="Carder C."/>
            <person name="Carter N.P."/>
            <person name="Chapman J.C."/>
            <person name="Chen Y."/>
            <person name="Clarke G."/>
            <person name="Clark S.Y."/>
            <person name="Clee C.M."/>
            <person name="Clegg S."/>
            <person name="Collier R.E."/>
            <person name="Corby N."/>
            <person name="Crosier M."/>
            <person name="Cummings A.T."/>
            <person name="Davies J."/>
            <person name="Dhami P."/>
            <person name="Dunn M."/>
            <person name="Dutta I."/>
            <person name="Dyer L.W."/>
            <person name="Earthrowl M.E."/>
            <person name="Faulkner L."/>
            <person name="Fleming C.J."/>
            <person name="Frankish A."/>
            <person name="Frankland J.A."/>
            <person name="French L."/>
            <person name="Fricker D.G."/>
            <person name="Garner P."/>
            <person name="Garnett J."/>
            <person name="Ghori J."/>
            <person name="Gilbert J.G.R."/>
            <person name="Glison C."/>
            <person name="Grafham D.V."/>
            <person name="Gribble S."/>
            <person name="Griffiths C."/>
            <person name="Griffiths-Jones S."/>
            <person name="Grocock R."/>
            <person name="Guy J."/>
            <person name="Hall R.E."/>
            <person name="Hammond S."/>
            <person name="Harley J.L."/>
            <person name="Harrison E.S.I."/>
            <person name="Hart E.A."/>
            <person name="Heath P.D."/>
            <person name="Henderson C.D."/>
            <person name="Hopkins B.L."/>
            <person name="Howard P.J."/>
            <person name="Howden P.J."/>
            <person name="Huckle E."/>
            <person name="Johnson C."/>
            <person name="Johnson D."/>
            <person name="Joy A.A."/>
            <person name="Kay M."/>
            <person name="Keenan S."/>
            <person name="Kershaw J.K."/>
            <person name="Kimberley A.M."/>
            <person name="King A."/>
            <person name="Knights A."/>
            <person name="Laird G.K."/>
            <person name="Langford C."/>
            <person name="Lawlor S."/>
            <person name="Leongamornlert D.A."/>
            <person name="Leversha M."/>
            <person name="Lloyd C."/>
            <person name="Lloyd D.M."/>
            <person name="Lovell J."/>
            <person name="Martin S."/>
            <person name="Mashreghi-Mohammadi M."/>
            <person name="Matthews L."/>
            <person name="McLaren S."/>
            <person name="McLay K.E."/>
            <person name="McMurray A."/>
            <person name="Milne S."/>
            <person name="Nickerson T."/>
            <person name="Nisbett J."/>
            <person name="Nordsiek G."/>
            <person name="Pearce A.V."/>
            <person name="Peck A.I."/>
            <person name="Porter K.M."/>
            <person name="Pandian R."/>
            <person name="Pelan S."/>
            <person name="Phillimore B."/>
            <person name="Povey S."/>
            <person name="Ramsey Y."/>
            <person name="Rand V."/>
            <person name="Scharfe M."/>
            <person name="Sehra H.K."/>
            <person name="Shownkeen R."/>
            <person name="Sims S.K."/>
            <person name="Skuce C.D."/>
            <person name="Smith M."/>
            <person name="Steward C.A."/>
            <person name="Swarbreck D."/>
            <person name="Sycamore N."/>
            <person name="Tester J."/>
            <person name="Thorpe A."/>
            <person name="Tracey A."/>
            <person name="Tromans A."/>
            <person name="Thomas D.W."/>
            <person name="Wall M."/>
            <person name="Wallis J.M."/>
            <person name="West A.P."/>
            <person name="Whitehead S.L."/>
            <person name="Willey D.L."/>
            <person name="Williams S.A."/>
            <person name="Wilming L."/>
            <person name="Wray P.W."/>
            <person name="Young L."/>
            <person name="Ashurst J.L."/>
            <person name="Coulson A."/>
            <person name="Blocker H."/>
            <person name="Durbin R.M."/>
            <person name="Sulston J.E."/>
            <person name="Hubbard T."/>
            <person name="Jackson M.J."/>
            <person name="Bentley D.R."/>
            <person name="Beck S."/>
            <person name="Rogers J."/>
            <person name="Dunham I."/>
        </authorList>
    </citation>
    <scope>NUCLEOTIDE SEQUENCE [LARGE SCALE GENOMIC DNA]</scope>
</reference>
<reference key="10">
    <citation type="submission" date="2005-09" db="EMBL/GenBank/DDBJ databases">
        <authorList>
            <person name="Mural R.J."/>
            <person name="Istrail S."/>
            <person name="Sutton G."/>
            <person name="Florea L."/>
            <person name="Halpern A.L."/>
            <person name="Mobarry C.M."/>
            <person name="Lippert R."/>
            <person name="Walenz B."/>
            <person name="Shatkay H."/>
            <person name="Dew I."/>
            <person name="Miller J.R."/>
            <person name="Flanigan M.J."/>
            <person name="Edwards N.J."/>
            <person name="Bolanos R."/>
            <person name="Fasulo D."/>
            <person name="Halldorsson B.V."/>
            <person name="Hannenhalli S."/>
            <person name="Turner R."/>
            <person name="Yooseph S."/>
            <person name="Lu F."/>
            <person name="Nusskern D.R."/>
            <person name="Shue B.C."/>
            <person name="Zheng X.H."/>
            <person name="Zhong F."/>
            <person name="Delcher A.L."/>
            <person name="Huson D.H."/>
            <person name="Kravitz S.A."/>
            <person name="Mouchard L."/>
            <person name="Reinert K."/>
            <person name="Remington K.A."/>
            <person name="Clark A.G."/>
            <person name="Waterman M.S."/>
            <person name="Eichler E.E."/>
            <person name="Adams M.D."/>
            <person name="Hunkapiller M.W."/>
            <person name="Myers E.W."/>
            <person name="Venter J.C."/>
        </authorList>
    </citation>
    <scope>NUCLEOTIDE SEQUENCE [LARGE SCALE GENOMIC DNA]</scope>
</reference>
<reference key="11">
    <citation type="journal article" date="2004" name="Genome Res.">
        <title>The status, quality, and expansion of the NIH full-length cDNA project: the Mammalian Gene Collection (MGC).</title>
        <authorList>
            <consortium name="The MGC Project Team"/>
        </authorList>
    </citation>
    <scope>NUCLEOTIDE SEQUENCE [LARGE SCALE MRNA] (ALLELE ALPHA-2B)</scope>
</reference>
<reference key="12">
    <citation type="journal article" date="1980" name="Science">
        <title>At least three human type alpha interferons: structure of alpha 2.</title>
        <authorList>
            <person name="Streuli M."/>
            <person name="Nagata S."/>
            <person name="Weissmann C."/>
        </authorList>
    </citation>
    <scope>NUCLEOTIDE SEQUENCE [GENOMIC DNA / MRNA] OF 7-188 (ALLELE ALPHA-2B)</scope>
</reference>
<reference key="13">
    <citation type="journal article" date="1983" name="Nucleic Acids Res.">
        <title>Formation of genes coding for hybrid proteins by recombination between related, cloned genes in E. coli.</title>
        <authorList>
            <person name="Weber H."/>
            <person name="Weissmann C."/>
        </authorList>
    </citation>
    <scope>NUCLEOTIDE SEQUENCE [GENOMIC DNA] OF 24-188</scope>
</reference>
<reference key="14">
    <citation type="journal article" date="1980" name="Nature">
        <title>A family of structural genes for human lymphoblastoid (leukocyte-type) interferon.</title>
        <authorList>
            <person name="Allen G."/>
            <person name="Fantes K.H."/>
        </authorList>
    </citation>
    <scope>PROTEIN SEQUENCE OF 24-112 AND 136-188</scope>
</reference>
<reference key="15">
    <citation type="journal article" date="1998" name="Biochem. J.">
        <title>Identification of nine interferon-alpha subtypes produced by Sendai virus-induced human peripheral blood leucocytes.</title>
        <authorList>
            <person name="Nyman T.A."/>
            <person name="Toeloe H."/>
            <person name="Parkkinen J."/>
            <person name="Kalkkinen N."/>
        </authorList>
    </citation>
    <scope>PROTEIN SEQUENCE OF 24-58</scope>
</reference>
<reference key="16">
    <citation type="journal article" date="1981" name="Nature">
        <title>Assignment of the disulphide bonds of leukocyte interferon.</title>
        <authorList>
            <person name="Wetzel R."/>
        </authorList>
    </citation>
    <scope>DISULFIDE BONDS</scope>
</reference>
<reference key="17">
    <citation type="journal article" date="1991" name="Biochem. J.">
        <title>Natural human interferon-alpha 2 is O-glycosylated.</title>
        <authorList>
            <person name="Adolf G.R."/>
            <person name="Kalsner I."/>
            <person name="Ahorn H."/>
            <person name="Maurer-Fogy I."/>
            <person name="Cantell K."/>
        </authorList>
    </citation>
    <scope>GLYCOSYLATION AT THR-129</scope>
    <scope>ALLELES ALPHA-2B AND ALPHA-2C</scope>
</reference>
<reference key="18">
    <citation type="journal article" date="1995" name="J. Interferon Cytokine Res.">
        <title>Interferon-alpha 2 variants in the human genome.</title>
        <authorList>
            <person name="Lee N."/>
            <person name="Ni D."/>
            <person name="Brissette R."/>
            <person name="Chou M."/>
            <person name="Hussain M."/>
            <person name="Gill D.S."/>
            <person name="Liao M.-J."/>
            <person name="Testa D."/>
        </authorList>
    </citation>
    <scope>POLYMORPHISM</scope>
</reference>
<reference key="19">
    <citation type="journal article" date="1993" name="Proteins">
        <title>A homology model of human interferon alpha-2.</title>
        <authorList>
            <person name="Murgolo N.J."/>
            <person name="Windsor W.T."/>
            <person name="Hruza A."/>
            <person name="Reichert P."/>
            <person name="Tsarbopoulos A."/>
            <person name="Baldwin S."/>
            <person name="Huang E."/>
            <person name="Pramanik B."/>
            <person name="Ealick S."/>
            <person name="Trotta P.P."/>
        </authorList>
    </citation>
    <scope>3D-STRUCTURE MODELING</scope>
</reference>
<reference key="20">
    <citation type="journal article" date="1996" name="Structure">
        <title>Zinc mediated dimer of human interferon-alpha 2b revealed by X-ray crystallography.</title>
        <authorList>
            <person name="Radhakrishnan R."/>
            <person name="Walter L.J."/>
            <person name="Hruza A."/>
            <person name="Reichert P."/>
            <person name="Trotta P.P."/>
            <person name="Nagabhushan T.L."/>
            <person name="Walter M.R."/>
        </authorList>
    </citation>
    <scope>X-RAY CRYSTALLOGRAPHY (2.9 ANGSTROMS)</scope>
</reference>
<reference key="21">
    <citation type="journal article" date="1997" name="J. Mol. Biol.">
        <title>The three-dimensional high resolution structure of human interferon alpha-2a determined by heteronuclear NMR spectroscopy in solution.</title>
        <authorList>
            <person name="Klaus W."/>
            <person name="Gsell B."/>
            <person name="Labhardt A.M."/>
            <person name="Wipf B."/>
            <person name="Senn H."/>
        </authorList>
    </citation>
    <scope>STRUCTURE BY NMR</scope>
</reference>
<reference key="22">
    <citation type="journal article" date="2006" name="Protein Sci.">
        <title>Determination of the human type I interferon receptor binding site on human interferon-alpha2 by cross saturation and an NMR-based model of the complex.</title>
        <authorList>
            <person name="Quadt-Akabayov S.R."/>
            <person name="Chill J.H."/>
            <person name="Levy R."/>
            <person name="Kessler N."/>
            <person name="Anglister J."/>
        </authorList>
    </citation>
    <scope>STRUCTURE BY NMR OF 24-188 IN COMPLEX WITH IFNAR2</scope>
    <scope>SUBUNIT</scope>
    <scope>DISULFIDE BONDS</scope>
</reference>
<reference key="23">
    <citation type="journal article" date="2010" name="Biochemistry">
        <title>Intermolecular interactions in a 44 kDa interferon-receptor complex detected by asymmetric reverse-protonation and two-dimensional NOESY.</title>
        <authorList>
            <person name="Nudelman I."/>
            <person name="Akabayov S.R."/>
            <person name="Schnur E."/>
            <person name="Biron Z."/>
            <person name="Levy R."/>
            <person name="Xu Y."/>
            <person name="Yang D."/>
            <person name="Anglister J."/>
        </authorList>
    </citation>
    <scope>STRUCTURE BY NMR OF 24-188 IN COMPLEX WITH IFNAR2</scope>
    <scope>SUBUNIT</scope>
    <scope>DISULFIDE BONDS</scope>
</reference>
<reference key="24">
    <citation type="journal article" date="2006" name="Science">
        <title>The consensus coding sequences of human breast and colorectal cancers.</title>
        <authorList>
            <person name="Sjoeblom T."/>
            <person name="Jones S."/>
            <person name="Wood L.D."/>
            <person name="Parsons D.W."/>
            <person name="Lin J."/>
            <person name="Barber T.D."/>
            <person name="Mandelker D."/>
            <person name="Leary R.J."/>
            <person name="Ptak J."/>
            <person name="Silliman N."/>
            <person name="Szabo S."/>
            <person name="Buckhaults P."/>
            <person name="Farrell C."/>
            <person name="Meeh P."/>
            <person name="Markowitz S.D."/>
            <person name="Willis J."/>
            <person name="Dawson D."/>
            <person name="Willson J.K.V."/>
            <person name="Gazdar A.F."/>
            <person name="Hartigan J."/>
            <person name="Wu L."/>
            <person name="Liu C."/>
            <person name="Parmigiani G."/>
            <person name="Park B.H."/>
            <person name="Bachman K.E."/>
            <person name="Papadopoulos N."/>
            <person name="Vogelstein B."/>
            <person name="Kinzler K.W."/>
            <person name="Velculescu V.E."/>
        </authorList>
    </citation>
    <scope>VARIANT [LARGE SCALE ANALYSIS] LEU-177</scope>
</reference>
<feature type="signal peptide" evidence="6 11">
    <location>
        <begin position="1"/>
        <end position="23"/>
    </location>
</feature>
<feature type="chain" id="PRO_0000016360" description="Interferon alpha-2">
    <location>
        <begin position="24"/>
        <end position="188"/>
    </location>
</feature>
<feature type="glycosylation site" id="CAR_000049" description="O-linked (GalNAc...) threonine" evidence="3">
    <location>
        <position position="129"/>
    </location>
</feature>
<feature type="disulfide bond" evidence="8">
    <location>
        <begin position="24"/>
        <end position="121"/>
    </location>
</feature>
<feature type="disulfide bond" evidence="8">
    <location>
        <begin position="52"/>
        <end position="161"/>
    </location>
</feature>
<feature type="sequence variant" id="VAR_055972" description="In dbSNP:rs35971916.">
    <original>A</original>
    <variation>D</variation>
    <location>
        <position position="6"/>
    </location>
</feature>
<feature type="sequence variant" id="VAR_004012" description="In allele alpha-2A; dbSNP:rs1061959." evidence="5 7 9 10">
    <original>R</original>
    <variation>K</variation>
    <location>
        <position position="46"/>
    </location>
</feature>
<feature type="sequence variant" id="VAR_013001" description="In allele alpha-2C; dbSNP:rs73420190." evidence="10">
    <original>H</original>
    <variation>R</variation>
    <location>
        <position position="57"/>
    </location>
</feature>
<feature type="sequence variant" id="VAR_036329" description="In a breast cancer sample; somatic mutation." evidence="1">
    <original>S</original>
    <variation>L</variation>
    <location>
        <position position="177"/>
    </location>
</feature>
<feature type="sequence conflict" description="In Ref. 6; AEX60803." evidence="13" ref="6">
    <original>Q</original>
    <variation>L</variation>
    <location>
        <position position="85"/>
    </location>
</feature>
<feature type="sequence conflict" description="In Ref. 6; AEX60802." evidence="13" ref="6">
    <original>K</original>
    <variation>M</variation>
    <location>
        <position position="93"/>
    </location>
</feature>
<feature type="helix" evidence="16">
    <location>
        <begin position="27"/>
        <end position="30"/>
    </location>
</feature>
<feature type="helix" evidence="15">
    <location>
        <begin position="32"/>
        <end position="44"/>
    </location>
</feature>
<feature type="helix" evidence="15">
    <location>
        <begin position="50"/>
        <end position="55"/>
    </location>
</feature>
<feature type="helix" evidence="15">
    <location>
        <begin position="63"/>
        <end position="65"/>
    </location>
</feature>
<feature type="strand" evidence="17">
    <location>
        <begin position="66"/>
        <end position="70"/>
    </location>
</feature>
<feature type="turn" evidence="16">
    <location>
        <begin position="72"/>
        <end position="74"/>
    </location>
</feature>
<feature type="helix" evidence="15">
    <location>
        <begin position="76"/>
        <end position="89"/>
    </location>
</feature>
<feature type="helix" evidence="15">
    <location>
        <begin position="93"/>
        <end position="98"/>
    </location>
</feature>
<feature type="helix" evidence="15">
    <location>
        <begin position="101"/>
        <end position="120"/>
    </location>
</feature>
<feature type="strand" evidence="14">
    <location>
        <begin position="126"/>
        <end position="129"/>
    </location>
</feature>
<feature type="turn" evidence="16">
    <location>
        <begin position="132"/>
        <end position="135"/>
    </location>
</feature>
<feature type="helix" evidence="15">
    <location>
        <begin position="138"/>
        <end position="155"/>
    </location>
</feature>
<feature type="turn" evidence="15">
    <location>
        <begin position="156"/>
        <end position="158"/>
    </location>
</feature>
<feature type="helix" evidence="15">
    <location>
        <begin position="160"/>
        <end position="177"/>
    </location>
</feature>
<feature type="strand" evidence="17">
    <location>
        <begin position="180"/>
        <end position="182"/>
    </location>
</feature>
<evidence type="ECO:0000269" key="1">
    <source>
    </source>
</evidence>
<evidence type="ECO:0000269" key="2">
    <source>
    </source>
</evidence>
<evidence type="ECO:0000269" key="3">
    <source>
    </source>
</evidence>
<evidence type="ECO:0000269" key="4">
    <source>
    </source>
</evidence>
<evidence type="ECO:0000269" key="5">
    <source>
    </source>
</evidence>
<evidence type="ECO:0000269" key="6">
    <source>
    </source>
</evidence>
<evidence type="ECO:0000269" key="7">
    <source>
    </source>
</evidence>
<evidence type="ECO:0000269" key="8">
    <source>
    </source>
</evidence>
<evidence type="ECO:0000269" key="9">
    <source>
    </source>
</evidence>
<evidence type="ECO:0000269" key="10">
    <source>
    </source>
</evidence>
<evidence type="ECO:0000269" key="11">
    <source>
    </source>
</evidence>
<evidence type="ECO:0000303" key="12">
    <source>
    </source>
</evidence>
<evidence type="ECO:0000305" key="13"/>
<evidence type="ECO:0007829" key="14">
    <source>
        <dbReference type="PDB" id="2HYM"/>
    </source>
</evidence>
<evidence type="ECO:0007829" key="15">
    <source>
        <dbReference type="PDB" id="3S9D"/>
    </source>
</evidence>
<evidence type="ECO:0007829" key="16">
    <source>
        <dbReference type="PDB" id="4YPG"/>
    </source>
</evidence>
<evidence type="ECO:0007829" key="17">
    <source>
        <dbReference type="PDB" id="4Z5R"/>
    </source>
</evidence>
<proteinExistence type="evidence at protein level"/>